<feature type="chain" id="PRO_0000139126" description="Methionine--tRNA ligase">
    <location>
        <begin position="1"/>
        <end position="613"/>
    </location>
</feature>
<feature type="short sequence motif" description="'HIGH' region">
    <location>
        <begin position="15"/>
        <end position="25"/>
    </location>
</feature>
<feature type="short sequence motif" description="'KMSKS' region">
    <location>
        <begin position="351"/>
        <end position="355"/>
    </location>
</feature>
<feature type="binding site" evidence="1">
    <location>
        <position position="147"/>
    </location>
    <ligand>
        <name>Zn(2+)</name>
        <dbReference type="ChEBI" id="CHEBI:29105"/>
    </ligand>
</feature>
<feature type="binding site" evidence="1">
    <location>
        <position position="150"/>
    </location>
    <ligand>
        <name>Zn(2+)</name>
        <dbReference type="ChEBI" id="CHEBI:29105"/>
    </ligand>
</feature>
<feature type="binding site" evidence="1">
    <location>
        <position position="160"/>
    </location>
    <ligand>
        <name>Zn(2+)</name>
        <dbReference type="ChEBI" id="CHEBI:29105"/>
    </ligand>
</feature>
<feature type="binding site" evidence="1">
    <location>
        <position position="163"/>
    </location>
    <ligand>
        <name>Zn(2+)</name>
        <dbReference type="ChEBI" id="CHEBI:29105"/>
    </ligand>
</feature>
<feature type="binding site" evidence="1">
    <location>
        <position position="354"/>
    </location>
    <ligand>
        <name>ATP</name>
        <dbReference type="ChEBI" id="CHEBI:30616"/>
    </ligand>
</feature>
<reference key="1">
    <citation type="journal article" date="2003" name="Genome Res.">
        <title>Comparative complete genome sequence analysis of the amino acid replacements responsible for the thermostability of Corynebacterium efficiens.</title>
        <authorList>
            <person name="Nishio Y."/>
            <person name="Nakamura Y."/>
            <person name="Kawarabayasi Y."/>
            <person name="Usuda Y."/>
            <person name="Kimura E."/>
            <person name="Sugimoto S."/>
            <person name="Matsui K."/>
            <person name="Yamagishi A."/>
            <person name="Kikuchi H."/>
            <person name="Ikeo K."/>
            <person name="Gojobori T."/>
        </authorList>
    </citation>
    <scope>NUCLEOTIDE SEQUENCE [LARGE SCALE GENOMIC DNA]</scope>
    <source>
        <strain>DSM 44549 / YS-314 / AJ 12310 / JCM 11189 / NBRC 100395</strain>
    </source>
</reference>
<organism>
    <name type="scientific">Corynebacterium efficiens (strain DSM 44549 / YS-314 / AJ 12310 / JCM 11189 / NBRC 100395)</name>
    <dbReference type="NCBI Taxonomy" id="196164"/>
    <lineage>
        <taxon>Bacteria</taxon>
        <taxon>Bacillati</taxon>
        <taxon>Actinomycetota</taxon>
        <taxon>Actinomycetes</taxon>
        <taxon>Mycobacteriales</taxon>
        <taxon>Corynebacteriaceae</taxon>
        <taxon>Corynebacterium</taxon>
    </lineage>
</organism>
<dbReference type="EC" id="6.1.1.10" evidence="1"/>
<dbReference type="EMBL" id="BA000035">
    <property type="protein sequence ID" value="BAC17777.1"/>
    <property type="molecule type" value="Genomic_DNA"/>
</dbReference>
<dbReference type="SMR" id="Q8FR00"/>
<dbReference type="STRING" id="196164.gene:10741373"/>
<dbReference type="KEGG" id="cef:CE0967"/>
<dbReference type="eggNOG" id="COG0143">
    <property type="taxonomic scope" value="Bacteria"/>
</dbReference>
<dbReference type="HOGENOM" id="CLU_009710_1_2_11"/>
<dbReference type="Proteomes" id="UP000001409">
    <property type="component" value="Chromosome"/>
</dbReference>
<dbReference type="GO" id="GO:0005829">
    <property type="term" value="C:cytosol"/>
    <property type="evidence" value="ECO:0007669"/>
    <property type="project" value="TreeGrafter"/>
</dbReference>
<dbReference type="GO" id="GO:0005524">
    <property type="term" value="F:ATP binding"/>
    <property type="evidence" value="ECO:0007669"/>
    <property type="project" value="UniProtKB-UniRule"/>
</dbReference>
<dbReference type="GO" id="GO:0046872">
    <property type="term" value="F:metal ion binding"/>
    <property type="evidence" value="ECO:0007669"/>
    <property type="project" value="UniProtKB-KW"/>
</dbReference>
<dbReference type="GO" id="GO:0004825">
    <property type="term" value="F:methionine-tRNA ligase activity"/>
    <property type="evidence" value="ECO:0007669"/>
    <property type="project" value="UniProtKB-UniRule"/>
</dbReference>
<dbReference type="GO" id="GO:0006431">
    <property type="term" value="P:methionyl-tRNA aminoacylation"/>
    <property type="evidence" value="ECO:0007669"/>
    <property type="project" value="UniProtKB-UniRule"/>
</dbReference>
<dbReference type="CDD" id="cd07957">
    <property type="entry name" value="Anticodon_Ia_Met"/>
    <property type="match status" value="1"/>
</dbReference>
<dbReference type="CDD" id="cd00814">
    <property type="entry name" value="MetRS_core"/>
    <property type="match status" value="1"/>
</dbReference>
<dbReference type="FunFam" id="2.20.28.20:FF:000001">
    <property type="entry name" value="Methionine--tRNA ligase"/>
    <property type="match status" value="1"/>
</dbReference>
<dbReference type="Gene3D" id="3.40.50.620">
    <property type="entry name" value="HUPs"/>
    <property type="match status" value="1"/>
</dbReference>
<dbReference type="Gene3D" id="1.10.730.10">
    <property type="entry name" value="Isoleucyl-tRNA Synthetase, Domain 1"/>
    <property type="match status" value="1"/>
</dbReference>
<dbReference type="Gene3D" id="2.20.28.20">
    <property type="entry name" value="Methionyl-tRNA synthetase, Zn-domain"/>
    <property type="match status" value="1"/>
</dbReference>
<dbReference type="HAMAP" id="MF_00098">
    <property type="entry name" value="Met_tRNA_synth_type1"/>
    <property type="match status" value="1"/>
</dbReference>
<dbReference type="InterPro" id="IPR041872">
    <property type="entry name" value="Anticodon_Met"/>
</dbReference>
<dbReference type="InterPro" id="IPR013155">
    <property type="entry name" value="M/V/L/I-tRNA-synth_anticd-bd"/>
</dbReference>
<dbReference type="InterPro" id="IPR023458">
    <property type="entry name" value="Met-tRNA_ligase_1"/>
</dbReference>
<dbReference type="InterPro" id="IPR014758">
    <property type="entry name" value="Met-tRNA_synth"/>
</dbReference>
<dbReference type="InterPro" id="IPR015413">
    <property type="entry name" value="Methionyl/Leucyl_tRNA_Synth"/>
</dbReference>
<dbReference type="InterPro" id="IPR033911">
    <property type="entry name" value="MetRS_core"/>
</dbReference>
<dbReference type="InterPro" id="IPR029038">
    <property type="entry name" value="MetRS_Zn"/>
</dbReference>
<dbReference type="InterPro" id="IPR014729">
    <property type="entry name" value="Rossmann-like_a/b/a_fold"/>
</dbReference>
<dbReference type="InterPro" id="IPR009080">
    <property type="entry name" value="tRNAsynth_Ia_anticodon-bd"/>
</dbReference>
<dbReference type="NCBIfam" id="TIGR00398">
    <property type="entry name" value="metG"/>
    <property type="match status" value="1"/>
</dbReference>
<dbReference type="PANTHER" id="PTHR45765">
    <property type="entry name" value="METHIONINE--TRNA LIGASE"/>
    <property type="match status" value="1"/>
</dbReference>
<dbReference type="PANTHER" id="PTHR45765:SF1">
    <property type="entry name" value="METHIONINE--TRNA LIGASE, CYTOPLASMIC"/>
    <property type="match status" value="1"/>
</dbReference>
<dbReference type="Pfam" id="PF08264">
    <property type="entry name" value="Anticodon_1"/>
    <property type="match status" value="1"/>
</dbReference>
<dbReference type="Pfam" id="PF09334">
    <property type="entry name" value="tRNA-synt_1g"/>
    <property type="match status" value="1"/>
</dbReference>
<dbReference type="PRINTS" id="PR01041">
    <property type="entry name" value="TRNASYNTHMET"/>
</dbReference>
<dbReference type="SUPFAM" id="SSF47323">
    <property type="entry name" value="Anticodon-binding domain of a subclass of class I aminoacyl-tRNA synthetases"/>
    <property type="match status" value="1"/>
</dbReference>
<dbReference type="SUPFAM" id="SSF57770">
    <property type="entry name" value="Methionyl-tRNA synthetase (MetRS), Zn-domain"/>
    <property type="match status" value="1"/>
</dbReference>
<dbReference type="SUPFAM" id="SSF52374">
    <property type="entry name" value="Nucleotidylyl transferase"/>
    <property type="match status" value="1"/>
</dbReference>
<keyword id="KW-0030">Aminoacyl-tRNA synthetase</keyword>
<keyword id="KW-0067">ATP-binding</keyword>
<keyword id="KW-0963">Cytoplasm</keyword>
<keyword id="KW-0436">Ligase</keyword>
<keyword id="KW-0479">Metal-binding</keyword>
<keyword id="KW-0547">Nucleotide-binding</keyword>
<keyword id="KW-0648">Protein biosynthesis</keyword>
<keyword id="KW-1185">Reference proteome</keyword>
<keyword id="KW-0862">Zinc</keyword>
<name>SYM_COREF</name>
<proteinExistence type="inferred from homology"/>
<gene>
    <name evidence="1" type="primary">metG</name>
    <name type="ordered locus">CE0967</name>
</gene>
<comment type="function">
    <text evidence="1">Is required not only for elongation of protein synthesis but also for the initiation of all mRNA translation through initiator tRNA(fMet) aminoacylation.</text>
</comment>
<comment type="catalytic activity">
    <reaction evidence="1">
        <text>tRNA(Met) + L-methionine + ATP = L-methionyl-tRNA(Met) + AMP + diphosphate</text>
        <dbReference type="Rhea" id="RHEA:13481"/>
        <dbReference type="Rhea" id="RHEA-COMP:9667"/>
        <dbReference type="Rhea" id="RHEA-COMP:9698"/>
        <dbReference type="ChEBI" id="CHEBI:30616"/>
        <dbReference type="ChEBI" id="CHEBI:33019"/>
        <dbReference type="ChEBI" id="CHEBI:57844"/>
        <dbReference type="ChEBI" id="CHEBI:78442"/>
        <dbReference type="ChEBI" id="CHEBI:78530"/>
        <dbReference type="ChEBI" id="CHEBI:456215"/>
        <dbReference type="EC" id="6.1.1.10"/>
    </reaction>
</comment>
<comment type="cofactor">
    <cofactor evidence="1">
        <name>Zn(2+)</name>
        <dbReference type="ChEBI" id="CHEBI:29105"/>
    </cofactor>
    <text evidence="1">Binds 1 zinc ion per subunit.</text>
</comment>
<comment type="subunit">
    <text evidence="1">Monomer.</text>
</comment>
<comment type="subcellular location">
    <subcellularLocation>
        <location evidence="1">Cytoplasm</location>
    </subcellularLocation>
</comment>
<comment type="similarity">
    <text evidence="1">Belongs to the class-I aminoacyl-tRNA synthetase family. MetG type 1 subfamily.</text>
</comment>
<sequence>MVRMTKNVLVSVAWPYANGPRHIGHVAGFGVPSDVFARFQRMRGNNVLMVSGTDEHGTPLLVQADKEGVSVQELADKYNRQIVEDLTGLGLSYDLFTRTTTSNHYAVVQELFRGLHDNGYMIKETTLGAISPSTGRTLPDRYIEGTCPICHADGARGDQCDNCGNQLDPADLINPVSKINGETPEFVETEHFLLDLPALADSLTAWLKGREDWRPNVLKFSLNLLEDIRPRAMTRDIDWGIPIPVEGWQDNNAKKLYVWFDAVVGYLSASIEWAWRTGDPEAWRTFWNDPETSSYYFMGKDNITFHSQIWPAELLGYAGRGSRGGEVGDLGELNLPTEVVSSEFLTMSGSKFSSSKGVVIYVKDFLAEFGPDPLRYFIAVAGPENNDTDFTWDEFVRRVNNELANGWGNLVNRTVSMAHKNFGEVPVPSALTDSDQRILDLAASTFDSAGADLELSKFKNAITQIMHVVGEANAYIAEQEPWKLAKDETQRERLATVLWTALQVVSDCNTMLTPYLPHTAQKVHETLGREGIWAASPQIVEVTNESPRQPVGVGLPDPEHTYPVIMGDYQAQAAKWERIDMVPGTPLNKPAPLVTKLDPELGETGPEWAPVQS</sequence>
<evidence type="ECO:0000255" key="1">
    <source>
        <dbReference type="HAMAP-Rule" id="MF_00098"/>
    </source>
</evidence>
<accession>Q8FR00</accession>
<protein>
    <recommendedName>
        <fullName evidence="1">Methionine--tRNA ligase</fullName>
        <ecNumber evidence="1">6.1.1.10</ecNumber>
    </recommendedName>
    <alternativeName>
        <fullName evidence="1">Methionyl-tRNA synthetase</fullName>
        <shortName evidence="1">MetRS</shortName>
    </alternativeName>
</protein>